<dbReference type="EC" id="2.7.11.-" evidence="1"/>
<dbReference type="EC" id="2.7.4.-" evidence="1"/>
<dbReference type="EMBL" id="CP000010">
    <property type="protein sequence ID" value="AAU48092.1"/>
    <property type="molecule type" value="Genomic_DNA"/>
</dbReference>
<dbReference type="RefSeq" id="WP_004195225.1">
    <property type="nucleotide sequence ID" value="NC_006348.1"/>
</dbReference>
<dbReference type="RefSeq" id="YP_104596.1">
    <property type="nucleotide sequence ID" value="NC_006348.1"/>
</dbReference>
<dbReference type="SMR" id="Q62FD1"/>
<dbReference type="GeneID" id="93059051"/>
<dbReference type="KEGG" id="bma:BMA3111"/>
<dbReference type="PATRIC" id="fig|243160.12.peg.3188"/>
<dbReference type="eggNOG" id="COG1493">
    <property type="taxonomic scope" value="Bacteria"/>
</dbReference>
<dbReference type="HOGENOM" id="CLU_052030_0_2_4"/>
<dbReference type="Proteomes" id="UP000006693">
    <property type="component" value="Chromosome 1"/>
</dbReference>
<dbReference type="GO" id="GO:0005524">
    <property type="term" value="F:ATP binding"/>
    <property type="evidence" value="ECO:0007669"/>
    <property type="project" value="UniProtKB-UniRule"/>
</dbReference>
<dbReference type="GO" id="GO:0000287">
    <property type="term" value="F:magnesium ion binding"/>
    <property type="evidence" value="ECO:0007669"/>
    <property type="project" value="UniProtKB-UniRule"/>
</dbReference>
<dbReference type="GO" id="GO:0000155">
    <property type="term" value="F:phosphorelay sensor kinase activity"/>
    <property type="evidence" value="ECO:0007669"/>
    <property type="project" value="InterPro"/>
</dbReference>
<dbReference type="GO" id="GO:0004674">
    <property type="term" value="F:protein serine/threonine kinase activity"/>
    <property type="evidence" value="ECO:0007669"/>
    <property type="project" value="UniProtKB-KW"/>
</dbReference>
<dbReference type="GO" id="GO:0004712">
    <property type="term" value="F:protein serine/threonine/tyrosine kinase activity"/>
    <property type="evidence" value="ECO:0007669"/>
    <property type="project" value="UniProtKB-UniRule"/>
</dbReference>
<dbReference type="GO" id="GO:0006109">
    <property type="term" value="P:regulation of carbohydrate metabolic process"/>
    <property type="evidence" value="ECO:0007669"/>
    <property type="project" value="UniProtKB-UniRule"/>
</dbReference>
<dbReference type="CDD" id="cd01918">
    <property type="entry name" value="HprK_C"/>
    <property type="match status" value="1"/>
</dbReference>
<dbReference type="FunFam" id="3.40.50.300:FF:000174">
    <property type="entry name" value="HPr kinase/phosphorylase"/>
    <property type="match status" value="1"/>
</dbReference>
<dbReference type="Gene3D" id="3.40.1390.20">
    <property type="entry name" value="HprK N-terminal domain-like"/>
    <property type="match status" value="1"/>
</dbReference>
<dbReference type="Gene3D" id="3.40.50.300">
    <property type="entry name" value="P-loop containing nucleotide triphosphate hydrolases"/>
    <property type="match status" value="1"/>
</dbReference>
<dbReference type="HAMAP" id="MF_01249">
    <property type="entry name" value="HPr_kinase"/>
    <property type="match status" value="1"/>
</dbReference>
<dbReference type="InterPro" id="IPR003755">
    <property type="entry name" value="HPr(Ser)_kin/Pase"/>
</dbReference>
<dbReference type="InterPro" id="IPR011104">
    <property type="entry name" value="Hpr_kin/Pase_C"/>
</dbReference>
<dbReference type="InterPro" id="IPR011126">
    <property type="entry name" value="Hpr_kin/Pase_Hpr_N"/>
</dbReference>
<dbReference type="InterPro" id="IPR027417">
    <property type="entry name" value="P-loop_NTPase"/>
</dbReference>
<dbReference type="InterPro" id="IPR028979">
    <property type="entry name" value="Ser_kin/Pase_Hpr-like_N_sf"/>
</dbReference>
<dbReference type="NCBIfam" id="TIGR00679">
    <property type="entry name" value="hpr-ser"/>
    <property type="match status" value="1"/>
</dbReference>
<dbReference type="PANTHER" id="PTHR30305:SF1">
    <property type="entry name" value="HPR KINASE_PHOSPHORYLASE"/>
    <property type="match status" value="1"/>
</dbReference>
<dbReference type="PANTHER" id="PTHR30305">
    <property type="entry name" value="PROTEIN YJDM-RELATED"/>
    <property type="match status" value="1"/>
</dbReference>
<dbReference type="Pfam" id="PF07475">
    <property type="entry name" value="Hpr_kinase_C"/>
    <property type="match status" value="1"/>
</dbReference>
<dbReference type="Pfam" id="PF02603">
    <property type="entry name" value="Hpr_kinase_N"/>
    <property type="match status" value="1"/>
</dbReference>
<dbReference type="SUPFAM" id="SSF75138">
    <property type="entry name" value="HprK N-terminal domain-like"/>
    <property type="match status" value="1"/>
</dbReference>
<dbReference type="SUPFAM" id="SSF53795">
    <property type="entry name" value="PEP carboxykinase-like"/>
    <property type="match status" value="1"/>
</dbReference>
<evidence type="ECO:0000255" key="1">
    <source>
        <dbReference type="HAMAP-Rule" id="MF_01249"/>
    </source>
</evidence>
<protein>
    <recommendedName>
        <fullName evidence="1">HPr kinase/phosphorylase</fullName>
        <shortName evidence="1">HPrK/P</shortName>
        <ecNumber evidence="1">2.7.11.-</ecNumber>
        <ecNumber evidence="1">2.7.4.-</ecNumber>
    </recommendedName>
    <alternativeName>
        <fullName evidence="1">HPr(Ser) kinase/phosphorylase</fullName>
    </alternativeName>
</protein>
<sequence>MDTSSINAQSIFDDNAAMLKLSWLTGHEGWERGFSADTVANATSSADLVGHLNLIHPNRIQVLGEAEIDYYQRQTDEDRSRHMAELIALEPPFLVVAGGAAAPPELVLRCTRSSTPLFTTPMSAAAVIDSLRLYMSRILAPRATLHGVFLDILGMGVLLTGDSGLGKSELGLELISRGHGLVADDAVDFVRLGPDFVEGRCPPLLQNLLEVRGLGLLDIKTIFGETAVRRKMKLKLIVQLVRRPDGEFQRLPLESQTVDVLGLPISKVTIQVAAGRNLAVLVEAAVRNTILQLRGIDTLRDFMDRQRLAMQDPDSQFPGKLV</sequence>
<feature type="chain" id="PRO_1000067132" description="HPr kinase/phosphorylase">
    <location>
        <begin position="1"/>
        <end position="322"/>
    </location>
</feature>
<feature type="region of interest" description="Important for the catalytic mechanism of both phosphorylation and dephosphorylation" evidence="1">
    <location>
        <begin position="209"/>
        <end position="218"/>
    </location>
</feature>
<feature type="region of interest" description="Important for the catalytic mechanism of dephosphorylation" evidence="1">
    <location>
        <begin position="271"/>
        <end position="276"/>
    </location>
</feature>
<feature type="active site" evidence="1">
    <location>
        <position position="146"/>
    </location>
</feature>
<feature type="active site" evidence="1">
    <location>
        <position position="167"/>
    </location>
</feature>
<feature type="active site" description="Proton acceptor; for phosphorylation activity. Proton donor; for dephosphorylation activity" evidence="1">
    <location>
        <position position="185"/>
    </location>
</feature>
<feature type="active site" evidence="1">
    <location>
        <position position="250"/>
    </location>
</feature>
<feature type="binding site" evidence="1">
    <location>
        <begin position="161"/>
        <end position="168"/>
    </location>
    <ligand>
        <name>ATP</name>
        <dbReference type="ChEBI" id="CHEBI:30616"/>
    </ligand>
</feature>
<feature type="binding site" evidence="1">
    <location>
        <position position="168"/>
    </location>
    <ligand>
        <name>Mg(2+)</name>
        <dbReference type="ChEBI" id="CHEBI:18420"/>
    </ligand>
</feature>
<feature type="binding site" evidence="1">
    <location>
        <position position="210"/>
    </location>
    <ligand>
        <name>Mg(2+)</name>
        <dbReference type="ChEBI" id="CHEBI:18420"/>
    </ligand>
</feature>
<comment type="function">
    <text evidence="1">Catalyzes the ATP- as well as the pyrophosphate-dependent phosphorylation of a specific serine residue in HPr, a phosphocarrier protein of the phosphoenolpyruvate-dependent sugar phosphotransferase system (PTS). HprK/P also catalyzes the pyrophosphate-producing, inorganic phosphate-dependent dephosphorylation (phosphorolysis) of seryl-phosphorylated HPr (P-Ser-HPr).</text>
</comment>
<comment type="catalytic activity">
    <reaction evidence="1">
        <text>[HPr protein]-L-serine + ATP = [HPr protein]-O-phospho-L-serine + ADP + H(+)</text>
        <dbReference type="Rhea" id="RHEA:46600"/>
        <dbReference type="Rhea" id="RHEA-COMP:11602"/>
        <dbReference type="Rhea" id="RHEA-COMP:11603"/>
        <dbReference type="ChEBI" id="CHEBI:15378"/>
        <dbReference type="ChEBI" id="CHEBI:29999"/>
        <dbReference type="ChEBI" id="CHEBI:30616"/>
        <dbReference type="ChEBI" id="CHEBI:83421"/>
        <dbReference type="ChEBI" id="CHEBI:456216"/>
    </reaction>
</comment>
<comment type="catalytic activity">
    <reaction evidence="1">
        <text>[HPr protein]-O-phospho-L-serine + phosphate + H(+) = [HPr protein]-L-serine + diphosphate</text>
        <dbReference type="Rhea" id="RHEA:46604"/>
        <dbReference type="Rhea" id="RHEA-COMP:11602"/>
        <dbReference type="Rhea" id="RHEA-COMP:11603"/>
        <dbReference type="ChEBI" id="CHEBI:15378"/>
        <dbReference type="ChEBI" id="CHEBI:29999"/>
        <dbReference type="ChEBI" id="CHEBI:33019"/>
        <dbReference type="ChEBI" id="CHEBI:43474"/>
        <dbReference type="ChEBI" id="CHEBI:83421"/>
    </reaction>
</comment>
<comment type="cofactor">
    <cofactor evidence="1">
        <name>Mg(2+)</name>
        <dbReference type="ChEBI" id="CHEBI:18420"/>
    </cofactor>
</comment>
<comment type="subunit">
    <text evidence="1">Homohexamer.</text>
</comment>
<comment type="domain">
    <text evidence="1">The Walker A ATP-binding motif also binds Pi and PPi.</text>
</comment>
<comment type="miscellaneous">
    <text evidence="1">Both phosphorylation and phosphorolysis are carried out by the same active site and suggest a common mechanism for both reactions.</text>
</comment>
<comment type="similarity">
    <text evidence="1">Belongs to the HPrK/P family.</text>
</comment>
<keyword id="KW-0067">ATP-binding</keyword>
<keyword id="KW-0418">Kinase</keyword>
<keyword id="KW-0460">Magnesium</keyword>
<keyword id="KW-0479">Metal-binding</keyword>
<keyword id="KW-0511">Multifunctional enzyme</keyword>
<keyword id="KW-0547">Nucleotide-binding</keyword>
<keyword id="KW-1185">Reference proteome</keyword>
<keyword id="KW-0723">Serine/threonine-protein kinase</keyword>
<keyword id="KW-0808">Transferase</keyword>
<gene>
    <name evidence="1" type="primary">hprK</name>
    <name type="ordered locus">BMA3111</name>
</gene>
<reference key="1">
    <citation type="journal article" date="2004" name="Proc. Natl. Acad. Sci. U.S.A.">
        <title>Structural flexibility in the Burkholderia mallei genome.</title>
        <authorList>
            <person name="Nierman W.C."/>
            <person name="DeShazer D."/>
            <person name="Kim H.S."/>
            <person name="Tettelin H."/>
            <person name="Nelson K.E."/>
            <person name="Feldblyum T.V."/>
            <person name="Ulrich R.L."/>
            <person name="Ronning C.M."/>
            <person name="Brinkac L.M."/>
            <person name="Daugherty S.C."/>
            <person name="Davidsen T.D."/>
            <person name="DeBoy R.T."/>
            <person name="Dimitrov G."/>
            <person name="Dodson R.J."/>
            <person name="Durkin A.S."/>
            <person name="Gwinn M.L."/>
            <person name="Haft D.H."/>
            <person name="Khouri H.M."/>
            <person name="Kolonay J.F."/>
            <person name="Madupu R."/>
            <person name="Mohammoud Y."/>
            <person name="Nelson W.C."/>
            <person name="Radune D."/>
            <person name="Romero C.M."/>
            <person name="Sarria S."/>
            <person name="Selengut J."/>
            <person name="Shamblin C."/>
            <person name="Sullivan S.A."/>
            <person name="White O."/>
            <person name="Yu Y."/>
            <person name="Zafar N."/>
            <person name="Zhou L."/>
            <person name="Fraser C.M."/>
        </authorList>
    </citation>
    <scope>NUCLEOTIDE SEQUENCE [LARGE SCALE GENOMIC DNA]</scope>
    <source>
        <strain>ATCC 23344</strain>
    </source>
</reference>
<accession>Q62FD1</accession>
<name>HPRK_BURMA</name>
<proteinExistence type="inferred from homology"/>
<organism>
    <name type="scientific">Burkholderia mallei (strain ATCC 23344)</name>
    <dbReference type="NCBI Taxonomy" id="243160"/>
    <lineage>
        <taxon>Bacteria</taxon>
        <taxon>Pseudomonadati</taxon>
        <taxon>Pseudomonadota</taxon>
        <taxon>Betaproteobacteria</taxon>
        <taxon>Burkholderiales</taxon>
        <taxon>Burkholderiaceae</taxon>
        <taxon>Burkholderia</taxon>
        <taxon>pseudomallei group</taxon>
    </lineage>
</organism>